<reference key="1">
    <citation type="journal article" date="1998" name="Virus Res.">
        <title>The complete sequence of four major structural proteins of African horse sickness virus serotype 6: evolutionary relationships within and between the orbiviruses.</title>
        <authorList>
            <person name="Williams C.F."/>
            <person name="Inoue T."/>
            <person name="Lucus A.-M."/>
            <person name="Zanotto P."/>
            <person name="Roy P."/>
        </authorList>
    </citation>
    <scope>NUCLEOTIDE SEQUENCE [MRNA]</scope>
</reference>
<accession>O71026</accession>
<sequence length="504" mass="56901">MGKFTSFLKRAGSATKNALTSDAAKRMYKMAGKTLQKVVESEVGSSAIDGVMQGTIQSIIQGENLGDSIRQAVILNVAGTLESAPDPLSPGEQLLYNKVSEIERAEKEDRVIETHNKKIIEKYGEDLLEIRKIMKGEAEAEQLEGKEMEYVEKALKGMLKIGKDQSERITRLYRALQTEEDLRTSDETRMISEYREKFDALKQAIELEQQATHEEAMQEMLDLSAEVIETAAEEVPIFGAGQANVVATTRAIQGGLKLKEIIDKLTGIDLSHLKVADIHPHIIEKAMLKDRIPDNELAMAIKSKVEVIDEMNTETEHVIESIIPLVKKEYEKHDNKYHVNIPSALKIHSEHTPKVHIYTTPWDSDKVFICRCIAPHHQQRSFMIGFDLEVEFVFYEDTSVEGHIMHGGAVSIEGRGFRQAYSEFMNSLVYPSTPELHKRRLQRSLGSHPIYMGSMVITVSYEQLVSNAMKLVYDTDLQMHCLRGPLKFQRRTLMNALLFGVKVA</sequence>
<organism>
    <name type="scientific">African horse sickness virus 6</name>
    <name type="common">AHSV-6</name>
    <dbReference type="NCBI Taxonomy" id="86060"/>
    <lineage>
        <taxon>Viruses</taxon>
        <taxon>Riboviria</taxon>
        <taxon>Orthornavirae</taxon>
        <taxon>Duplornaviricota</taxon>
        <taxon>Resentoviricetes</taxon>
        <taxon>Reovirales</taxon>
        <taxon>Sedoreoviridae</taxon>
        <taxon>Orbivirus</taxon>
        <taxon>African horse sickness virus</taxon>
    </lineage>
</organism>
<dbReference type="EMBL" id="AF021237">
    <property type="protein sequence ID" value="AAC40996.1"/>
    <property type="molecule type" value="mRNA"/>
</dbReference>
<dbReference type="SMR" id="O71026"/>
<dbReference type="GO" id="GO:0039624">
    <property type="term" value="C:viral outer capsid"/>
    <property type="evidence" value="ECO:0007669"/>
    <property type="project" value="UniProtKB-KW"/>
</dbReference>
<dbReference type="GO" id="GO:0005198">
    <property type="term" value="F:structural molecule activity"/>
    <property type="evidence" value="ECO:0007669"/>
    <property type="project" value="InterPro"/>
</dbReference>
<dbReference type="GO" id="GO:0140267">
    <property type="term" value="P:symbiont entry into host cell via permeabilization of host membrane"/>
    <property type="evidence" value="ECO:0007669"/>
    <property type="project" value="UniProtKB-KW"/>
</dbReference>
<dbReference type="InterPro" id="IPR000145">
    <property type="entry name" value="Capsid_VP5_Orbivir"/>
</dbReference>
<dbReference type="Pfam" id="PF00901">
    <property type="entry name" value="Orbi_VP5"/>
    <property type="match status" value="1"/>
</dbReference>
<proteinExistence type="evidence at transcript level"/>
<comment type="function">
    <text evidence="1">VP5 protein is one of the two proteins (with VP2) which constitute the virus particle outer capsid. Acts as a membrane permeabilization protein that mediates release of viral particles from endosomal compartments into the cytoplasm. Permeabilization activity is probably negatively regulated by VP2 and is triggered by endosomal degradation of VP2 and exposure to low pH (By similarity).</text>
</comment>
<comment type="subcellular location">
    <subcellularLocation>
        <location evidence="2">Virion</location>
    </subcellularLocation>
</comment>
<comment type="similarity">
    <text evidence="2">Belongs to the orbivirus VP5 family.</text>
</comment>
<keyword id="KW-0167">Capsid protein</keyword>
<keyword id="KW-1152">Outer capsid protein</keyword>
<keyword id="KW-1162">Viral penetration into host cytoplasm</keyword>
<keyword id="KW-1173">Viral penetration via permeabilization of host membrane</keyword>
<keyword id="KW-0946">Virion</keyword>
<keyword id="KW-1160">Virus entry into host cell</keyword>
<organismHost>
    <name type="scientific">Camelus dromedarius</name>
    <name type="common">Dromedary</name>
    <name type="synonym">Arabian camel</name>
    <dbReference type="NCBI Taxonomy" id="9838"/>
</organismHost>
<organismHost>
    <name type="scientific">Canis lupus familiaris</name>
    <name type="common">Dog</name>
    <name type="synonym">Canis familiaris</name>
    <dbReference type="NCBI Taxonomy" id="9615"/>
</organismHost>
<organismHost>
    <name type="scientific">Equus asinus</name>
    <name type="common">Donkey</name>
    <name type="synonym">Equus africanus asinus</name>
    <dbReference type="NCBI Taxonomy" id="9793"/>
</organismHost>
<organismHost>
    <name type="scientific">Equus caballus</name>
    <name type="common">Horse</name>
    <dbReference type="NCBI Taxonomy" id="9796"/>
</organismHost>
<organismHost>
    <name type="scientific">Equus hemionus</name>
    <name type="common">Onager</name>
    <name type="synonym">Asian wild ass</name>
    <dbReference type="NCBI Taxonomy" id="9794"/>
</organismHost>
<organismHost>
    <name type="scientific">Equus quagga burchellii</name>
    <name type="common">Burchell's zebra</name>
    <name type="synonym">Equus burchelli</name>
    <dbReference type="NCBI Taxonomy" id="89252"/>
</organismHost>
<organismHost>
    <name type="scientific">Loxodonta africana</name>
    <name type="common">African elephant</name>
    <dbReference type="NCBI Taxonomy" id="9785"/>
</organismHost>
<name>VP5_AHSV6</name>
<gene>
    <name type="primary">Segment-6</name>
    <name type="synonym">M6</name>
</gene>
<evidence type="ECO:0000250" key="1"/>
<evidence type="ECO:0000305" key="2"/>
<feature type="chain" id="PRO_0000222717" description="Outer capsid protein VP5">
    <location>
        <begin position="1"/>
        <end position="504"/>
    </location>
</feature>
<feature type="region of interest" description="Involved in membrane permeabilization" evidence="1">
    <location>
        <begin position="1"/>
        <end position="42"/>
    </location>
</feature>
<protein>
    <recommendedName>
        <fullName>Outer capsid protein VP5</fullName>
    </recommendedName>
</protein>